<keyword id="KW-1185">Reference proteome</keyword>
<keyword id="KW-0687">Ribonucleoprotein</keyword>
<keyword id="KW-0689">Ribosomal protein</keyword>
<gene>
    <name evidence="1" type="primary">rpsP</name>
    <name type="ordered locus">Sden_2754</name>
</gene>
<evidence type="ECO:0000255" key="1">
    <source>
        <dbReference type="HAMAP-Rule" id="MF_00385"/>
    </source>
</evidence>
<evidence type="ECO:0000305" key="2"/>
<reference key="1">
    <citation type="submission" date="2006-03" db="EMBL/GenBank/DDBJ databases">
        <title>Complete sequence of Shewanella denitrificans OS217.</title>
        <authorList>
            <consortium name="US DOE Joint Genome Institute"/>
            <person name="Copeland A."/>
            <person name="Lucas S."/>
            <person name="Lapidus A."/>
            <person name="Barry K."/>
            <person name="Detter J.C."/>
            <person name="Glavina del Rio T."/>
            <person name="Hammon N."/>
            <person name="Israni S."/>
            <person name="Dalin E."/>
            <person name="Tice H."/>
            <person name="Pitluck S."/>
            <person name="Brettin T."/>
            <person name="Bruce D."/>
            <person name="Han C."/>
            <person name="Tapia R."/>
            <person name="Gilna P."/>
            <person name="Kiss H."/>
            <person name="Schmutz J."/>
            <person name="Larimer F."/>
            <person name="Land M."/>
            <person name="Hauser L."/>
            <person name="Kyrpides N."/>
            <person name="Lykidis A."/>
            <person name="Richardson P."/>
        </authorList>
    </citation>
    <scope>NUCLEOTIDE SEQUENCE [LARGE SCALE GENOMIC DNA]</scope>
    <source>
        <strain>OS217 / ATCC BAA-1090 / DSM 15013</strain>
    </source>
</reference>
<name>RS16_SHEDO</name>
<accession>Q12KJ3</accession>
<protein>
    <recommendedName>
        <fullName evidence="1">Small ribosomal subunit protein bS16</fullName>
    </recommendedName>
    <alternativeName>
        <fullName evidence="2">30S ribosomal protein S16</fullName>
    </alternativeName>
</protein>
<organism>
    <name type="scientific">Shewanella denitrificans (strain OS217 / ATCC BAA-1090 / DSM 15013)</name>
    <dbReference type="NCBI Taxonomy" id="318161"/>
    <lineage>
        <taxon>Bacteria</taxon>
        <taxon>Pseudomonadati</taxon>
        <taxon>Pseudomonadota</taxon>
        <taxon>Gammaproteobacteria</taxon>
        <taxon>Alteromonadales</taxon>
        <taxon>Shewanellaceae</taxon>
        <taxon>Shewanella</taxon>
    </lineage>
</organism>
<dbReference type="EMBL" id="CP000302">
    <property type="protein sequence ID" value="ABE56033.1"/>
    <property type="molecule type" value="Genomic_DNA"/>
</dbReference>
<dbReference type="RefSeq" id="WP_011497183.1">
    <property type="nucleotide sequence ID" value="NC_007954.1"/>
</dbReference>
<dbReference type="SMR" id="Q12KJ3"/>
<dbReference type="STRING" id="318161.Sden_2754"/>
<dbReference type="KEGG" id="sdn:Sden_2754"/>
<dbReference type="eggNOG" id="COG0228">
    <property type="taxonomic scope" value="Bacteria"/>
</dbReference>
<dbReference type="HOGENOM" id="CLU_100590_5_1_6"/>
<dbReference type="OrthoDB" id="9807878at2"/>
<dbReference type="Proteomes" id="UP000001982">
    <property type="component" value="Chromosome"/>
</dbReference>
<dbReference type="GO" id="GO:0005737">
    <property type="term" value="C:cytoplasm"/>
    <property type="evidence" value="ECO:0007669"/>
    <property type="project" value="UniProtKB-ARBA"/>
</dbReference>
<dbReference type="GO" id="GO:0015935">
    <property type="term" value="C:small ribosomal subunit"/>
    <property type="evidence" value="ECO:0007669"/>
    <property type="project" value="TreeGrafter"/>
</dbReference>
<dbReference type="GO" id="GO:0003735">
    <property type="term" value="F:structural constituent of ribosome"/>
    <property type="evidence" value="ECO:0007669"/>
    <property type="project" value="InterPro"/>
</dbReference>
<dbReference type="GO" id="GO:0006412">
    <property type="term" value="P:translation"/>
    <property type="evidence" value="ECO:0007669"/>
    <property type="project" value="UniProtKB-UniRule"/>
</dbReference>
<dbReference type="FunFam" id="3.30.1320.10:FF:000001">
    <property type="entry name" value="30S ribosomal protein S16"/>
    <property type="match status" value="1"/>
</dbReference>
<dbReference type="Gene3D" id="3.30.1320.10">
    <property type="match status" value="1"/>
</dbReference>
<dbReference type="HAMAP" id="MF_00385">
    <property type="entry name" value="Ribosomal_bS16"/>
    <property type="match status" value="1"/>
</dbReference>
<dbReference type="InterPro" id="IPR000307">
    <property type="entry name" value="Ribosomal_bS16"/>
</dbReference>
<dbReference type="InterPro" id="IPR020592">
    <property type="entry name" value="Ribosomal_bS16_CS"/>
</dbReference>
<dbReference type="InterPro" id="IPR023803">
    <property type="entry name" value="Ribosomal_bS16_dom_sf"/>
</dbReference>
<dbReference type="NCBIfam" id="TIGR00002">
    <property type="entry name" value="S16"/>
    <property type="match status" value="1"/>
</dbReference>
<dbReference type="PANTHER" id="PTHR12919">
    <property type="entry name" value="30S RIBOSOMAL PROTEIN S16"/>
    <property type="match status" value="1"/>
</dbReference>
<dbReference type="PANTHER" id="PTHR12919:SF20">
    <property type="entry name" value="SMALL RIBOSOMAL SUBUNIT PROTEIN BS16M"/>
    <property type="match status" value="1"/>
</dbReference>
<dbReference type="Pfam" id="PF00886">
    <property type="entry name" value="Ribosomal_S16"/>
    <property type="match status" value="1"/>
</dbReference>
<dbReference type="SUPFAM" id="SSF54565">
    <property type="entry name" value="Ribosomal protein S16"/>
    <property type="match status" value="1"/>
</dbReference>
<dbReference type="PROSITE" id="PS00732">
    <property type="entry name" value="RIBOSOMAL_S16"/>
    <property type="match status" value="1"/>
</dbReference>
<sequence length="83" mass="9312">MVTIRLARGGAKKRPFYNIVVADSRNARDGRFIERVGFFNPLARGQEETLRLDLDRVEHWVATGAATSDRVAKLIKDARKATA</sequence>
<feature type="chain" id="PRO_1000049345" description="Small ribosomal subunit protein bS16">
    <location>
        <begin position="1"/>
        <end position="83"/>
    </location>
</feature>
<proteinExistence type="inferred from homology"/>
<comment type="similarity">
    <text evidence="1">Belongs to the bacterial ribosomal protein bS16 family.</text>
</comment>